<feature type="chain" id="PRO_0000336927" description="7-cyano-7-deazaguanine synthase">
    <location>
        <begin position="1"/>
        <end position="236"/>
    </location>
</feature>
<feature type="binding site" evidence="1">
    <location>
        <begin position="13"/>
        <end position="23"/>
    </location>
    <ligand>
        <name>ATP</name>
        <dbReference type="ChEBI" id="CHEBI:30616"/>
    </ligand>
</feature>
<feature type="binding site" evidence="1">
    <location>
        <position position="200"/>
    </location>
    <ligand>
        <name>Zn(2+)</name>
        <dbReference type="ChEBI" id="CHEBI:29105"/>
    </ligand>
</feature>
<feature type="binding site" evidence="1">
    <location>
        <position position="215"/>
    </location>
    <ligand>
        <name>Zn(2+)</name>
        <dbReference type="ChEBI" id="CHEBI:29105"/>
    </ligand>
</feature>
<feature type="binding site" evidence="1">
    <location>
        <position position="218"/>
    </location>
    <ligand>
        <name>Zn(2+)</name>
        <dbReference type="ChEBI" id="CHEBI:29105"/>
    </ligand>
</feature>
<feature type="binding site" evidence="1">
    <location>
        <position position="221"/>
    </location>
    <ligand>
        <name>Zn(2+)</name>
        <dbReference type="ChEBI" id="CHEBI:29105"/>
    </ligand>
</feature>
<evidence type="ECO:0000255" key="1">
    <source>
        <dbReference type="HAMAP-Rule" id="MF_01633"/>
    </source>
</evidence>
<protein>
    <recommendedName>
        <fullName evidence="1">7-cyano-7-deazaguanine synthase</fullName>
        <ecNumber evidence="1">6.3.4.20</ecNumber>
    </recommendedName>
    <alternativeName>
        <fullName evidence="1">7-cyano-7-carbaguanine synthase</fullName>
    </alternativeName>
    <alternativeName>
        <fullName evidence="1">PreQ(0) synthase</fullName>
    </alternativeName>
    <alternativeName>
        <fullName evidence="1">Queuosine biosynthesis protein QueC</fullName>
    </alternativeName>
</protein>
<proteinExistence type="inferred from homology"/>
<accession>A7HXX1</accession>
<organism>
    <name type="scientific">Parvibaculum lavamentivorans (strain DS-1 / DSM 13023 / NCIMB 13966)</name>
    <dbReference type="NCBI Taxonomy" id="402881"/>
    <lineage>
        <taxon>Bacteria</taxon>
        <taxon>Pseudomonadati</taxon>
        <taxon>Pseudomonadota</taxon>
        <taxon>Alphaproteobacteria</taxon>
        <taxon>Hyphomicrobiales</taxon>
        <taxon>Parvibaculaceae</taxon>
        <taxon>Parvibaculum</taxon>
    </lineage>
</organism>
<sequence>MATTEKTKALVLFSGGQDSTVCLASVLARYDEVETVGFDYGQAHAVELGCRAKLRDALTRFPGWGAKLGPDHMIALPELGRISETALTRDVEIEMGENGLPTTFVPGRNLLFFTYAAALGYRRGASVIVGGMCETDYSGYPDCRADTIAALERAICLGMDRAFTLETPLMRIDKAATWALAHELGGDALVDLIIEETHSCYRGDRSKRHDWGYGCGTCPACELRARGYTAYLAGKA</sequence>
<name>QUEC_PARL1</name>
<dbReference type="EC" id="6.3.4.20" evidence="1"/>
<dbReference type="EMBL" id="CP000774">
    <property type="protein sequence ID" value="ABS64754.1"/>
    <property type="molecule type" value="Genomic_DNA"/>
</dbReference>
<dbReference type="RefSeq" id="WP_012112076.1">
    <property type="nucleotide sequence ID" value="NC_009719.1"/>
</dbReference>
<dbReference type="SMR" id="A7HXX1"/>
<dbReference type="STRING" id="402881.Plav_3148"/>
<dbReference type="KEGG" id="pla:Plav_3148"/>
<dbReference type="eggNOG" id="COG0603">
    <property type="taxonomic scope" value="Bacteria"/>
</dbReference>
<dbReference type="HOGENOM" id="CLU_081854_0_0_5"/>
<dbReference type="OrthoDB" id="9789567at2"/>
<dbReference type="UniPathway" id="UPA00391"/>
<dbReference type="Proteomes" id="UP000006377">
    <property type="component" value="Chromosome"/>
</dbReference>
<dbReference type="GO" id="GO:0005524">
    <property type="term" value="F:ATP binding"/>
    <property type="evidence" value="ECO:0007669"/>
    <property type="project" value="UniProtKB-UniRule"/>
</dbReference>
<dbReference type="GO" id="GO:0016879">
    <property type="term" value="F:ligase activity, forming carbon-nitrogen bonds"/>
    <property type="evidence" value="ECO:0007669"/>
    <property type="project" value="UniProtKB-UniRule"/>
</dbReference>
<dbReference type="GO" id="GO:0008270">
    <property type="term" value="F:zinc ion binding"/>
    <property type="evidence" value="ECO:0007669"/>
    <property type="project" value="UniProtKB-UniRule"/>
</dbReference>
<dbReference type="GO" id="GO:0008616">
    <property type="term" value="P:queuosine biosynthetic process"/>
    <property type="evidence" value="ECO:0007669"/>
    <property type="project" value="UniProtKB-UniRule"/>
</dbReference>
<dbReference type="CDD" id="cd01995">
    <property type="entry name" value="QueC-like"/>
    <property type="match status" value="1"/>
</dbReference>
<dbReference type="Gene3D" id="3.40.50.620">
    <property type="entry name" value="HUPs"/>
    <property type="match status" value="1"/>
</dbReference>
<dbReference type="HAMAP" id="MF_01633">
    <property type="entry name" value="QueC"/>
    <property type="match status" value="1"/>
</dbReference>
<dbReference type="InterPro" id="IPR018317">
    <property type="entry name" value="QueC"/>
</dbReference>
<dbReference type="InterPro" id="IPR014729">
    <property type="entry name" value="Rossmann-like_a/b/a_fold"/>
</dbReference>
<dbReference type="NCBIfam" id="TIGR00364">
    <property type="entry name" value="7-cyano-7-deazaguanine synthase QueC"/>
    <property type="match status" value="1"/>
</dbReference>
<dbReference type="PANTHER" id="PTHR42914">
    <property type="entry name" value="7-CYANO-7-DEAZAGUANINE SYNTHASE"/>
    <property type="match status" value="1"/>
</dbReference>
<dbReference type="PANTHER" id="PTHR42914:SF1">
    <property type="entry name" value="7-CYANO-7-DEAZAGUANINE SYNTHASE"/>
    <property type="match status" value="1"/>
</dbReference>
<dbReference type="Pfam" id="PF06508">
    <property type="entry name" value="QueC"/>
    <property type="match status" value="1"/>
</dbReference>
<dbReference type="PIRSF" id="PIRSF006293">
    <property type="entry name" value="ExsB"/>
    <property type="match status" value="1"/>
</dbReference>
<dbReference type="SUPFAM" id="SSF52402">
    <property type="entry name" value="Adenine nucleotide alpha hydrolases-like"/>
    <property type="match status" value="1"/>
</dbReference>
<reference key="1">
    <citation type="journal article" date="2011" name="Stand. Genomic Sci.">
        <title>Complete genome sequence of Parvibaculum lavamentivorans type strain (DS-1(T)).</title>
        <authorList>
            <person name="Schleheck D."/>
            <person name="Weiss M."/>
            <person name="Pitluck S."/>
            <person name="Bruce D."/>
            <person name="Land M.L."/>
            <person name="Han S."/>
            <person name="Saunders E."/>
            <person name="Tapia R."/>
            <person name="Detter C."/>
            <person name="Brettin T."/>
            <person name="Han J."/>
            <person name="Woyke T."/>
            <person name="Goodwin L."/>
            <person name="Pennacchio L."/>
            <person name="Nolan M."/>
            <person name="Cook A.M."/>
            <person name="Kjelleberg S."/>
            <person name="Thomas T."/>
        </authorList>
    </citation>
    <scope>NUCLEOTIDE SEQUENCE [LARGE SCALE GENOMIC DNA]</scope>
    <source>
        <strain>DS-1 / DSM 13023 / NCIMB 13966</strain>
    </source>
</reference>
<gene>
    <name evidence="1" type="primary">queC</name>
    <name type="ordered locus">Plav_3148</name>
</gene>
<keyword id="KW-0067">ATP-binding</keyword>
<keyword id="KW-0436">Ligase</keyword>
<keyword id="KW-0479">Metal-binding</keyword>
<keyword id="KW-0547">Nucleotide-binding</keyword>
<keyword id="KW-0671">Queuosine biosynthesis</keyword>
<keyword id="KW-1185">Reference proteome</keyword>
<keyword id="KW-0862">Zinc</keyword>
<comment type="function">
    <text evidence="1">Catalyzes the ATP-dependent conversion of 7-carboxy-7-deazaguanine (CDG) to 7-cyano-7-deazaguanine (preQ(0)).</text>
</comment>
<comment type="catalytic activity">
    <reaction evidence="1">
        <text>7-carboxy-7-deazaguanine + NH4(+) + ATP = 7-cyano-7-deazaguanine + ADP + phosphate + H2O + H(+)</text>
        <dbReference type="Rhea" id="RHEA:27982"/>
        <dbReference type="ChEBI" id="CHEBI:15377"/>
        <dbReference type="ChEBI" id="CHEBI:15378"/>
        <dbReference type="ChEBI" id="CHEBI:28938"/>
        <dbReference type="ChEBI" id="CHEBI:30616"/>
        <dbReference type="ChEBI" id="CHEBI:43474"/>
        <dbReference type="ChEBI" id="CHEBI:45075"/>
        <dbReference type="ChEBI" id="CHEBI:61036"/>
        <dbReference type="ChEBI" id="CHEBI:456216"/>
        <dbReference type="EC" id="6.3.4.20"/>
    </reaction>
</comment>
<comment type="cofactor">
    <cofactor evidence="1">
        <name>Zn(2+)</name>
        <dbReference type="ChEBI" id="CHEBI:29105"/>
    </cofactor>
    <text evidence="1">Binds 1 zinc ion per subunit.</text>
</comment>
<comment type="pathway">
    <text evidence="1">Purine metabolism; 7-cyano-7-deazaguanine biosynthesis.</text>
</comment>
<comment type="similarity">
    <text evidence="1">Belongs to the QueC family.</text>
</comment>